<proteinExistence type="inferred from homology"/>
<name>LEU3_VIBVY</name>
<accession>Q7MP78</accession>
<evidence type="ECO:0000255" key="1">
    <source>
        <dbReference type="HAMAP-Rule" id="MF_01033"/>
    </source>
</evidence>
<organism>
    <name type="scientific">Vibrio vulnificus (strain YJ016)</name>
    <dbReference type="NCBI Taxonomy" id="196600"/>
    <lineage>
        <taxon>Bacteria</taxon>
        <taxon>Pseudomonadati</taxon>
        <taxon>Pseudomonadota</taxon>
        <taxon>Gammaproteobacteria</taxon>
        <taxon>Vibrionales</taxon>
        <taxon>Vibrionaceae</taxon>
        <taxon>Vibrio</taxon>
    </lineage>
</organism>
<reference key="1">
    <citation type="journal article" date="2003" name="Genome Res.">
        <title>Comparative genome analysis of Vibrio vulnificus, a marine pathogen.</title>
        <authorList>
            <person name="Chen C.-Y."/>
            <person name="Wu K.-M."/>
            <person name="Chang Y.-C."/>
            <person name="Chang C.-H."/>
            <person name="Tsai H.-C."/>
            <person name="Liao T.-L."/>
            <person name="Liu Y.-M."/>
            <person name="Chen H.-J."/>
            <person name="Shen A.B.-T."/>
            <person name="Li J.-C."/>
            <person name="Su T.-L."/>
            <person name="Shao C.-P."/>
            <person name="Lee C.-T."/>
            <person name="Hor L.-I."/>
            <person name="Tsai S.-F."/>
        </authorList>
    </citation>
    <scope>NUCLEOTIDE SEQUENCE [LARGE SCALE GENOMIC DNA]</scope>
    <source>
        <strain>YJ016</strain>
    </source>
</reference>
<protein>
    <recommendedName>
        <fullName evidence="1">3-isopropylmalate dehydrogenase</fullName>
        <ecNumber evidence="1">1.1.1.85</ecNumber>
    </recommendedName>
    <alternativeName>
        <fullName evidence="1">3-IPM-DH</fullName>
    </alternativeName>
    <alternativeName>
        <fullName evidence="1">Beta-IPM dehydrogenase</fullName>
        <shortName evidence="1">IMDH</shortName>
    </alternativeName>
</protein>
<keyword id="KW-0028">Amino-acid biosynthesis</keyword>
<keyword id="KW-0100">Branched-chain amino acid biosynthesis</keyword>
<keyword id="KW-0963">Cytoplasm</keyword>
<keyword id="KW-0432">Leucine biosynthesis</keyword>
<keyword id="KW-0460">Magnesium</keyword>
<keyword id="KW-0464">Manganese</keyword>
<keyword id="KW-0479">Metal-binding</keyword>
<keyword id="KW-0520">NAD</keyword>
<keyword id="KW-0560">Oxidoreductase</keyword>
<feature type="chain" id="PRO_0000083782" description="3-isopropylmalate dehydrogenase">
    <location>
        <begin position="1"/>
        <end position="363"/>
    </location>
</feature>
<feature type="binding site" evidence="1">
    <location>
        <begin position="79"/>
        <end position="92"/>
    </location>
    <ligand>
        <name>NAD(+)</name>
        <dbReference type="ChEBI" id="CHEBI:57540"/>
    </ligand>
</feature>
<feature type="binding site" evidence="1">
    <location>
        <position position="100"/>
    </location>
    <ligand>
        <name>substrate</name>
    </ligand>
</feature>
<feature type="binding site" evidence="1">
    <location>
        <position position="110"/>
    </location>
    <ligand>
        <name>substrate</name>
    </ligand>
</feature>
<feature type="binding site" evidence="1">
    <location>
        <position position="139"/>
    </location>
    <ligand>
        <name>substrate</name>
    </ligand>
</feature>
<feature type="binding site" evidence="1">
    <location>
        <position position="228"/>
    </location>
    <ligand>
        <name>Mg(2+)</name>
        <dbReference type="ChEBI" id="CHEBI:18420"/>
    </ligand>
</feature>
<feature type="binding site" evidence="1">
    <location>
        <position position="228"/>
    </location>
    <ligand>
        <name>substrate</name>
    </ligand>
</feature>
<feature type="binding site" evidence="1">
    <location>
        <position position="252"/>
    </location>
    <ligand>
        <name>Mg(2+)</name>
        <dbReference type="ChEBI" id="CHEBI:18420"/>
    </ligand>
</feature>
<feature type="binding site" evidence="1">
    <location>
        <position position="256"/>
    </location>
    <ligand>
        <name>Mg(2+)</name>
        <dbReference type="ChEBI" id="CHEBI:18420"/>
    </ligand>
</feature>
<feature type="binding site" evidence="1">
    <location>
        <begin position="286"/>
        <end position="298"/>
    </location>
    <ligand>
        <name>NAD(+)</name>
        <dbReference type="ChEBI" id="CHEBI:57540"/>
    </ligand>
</feature>
<feature type="site" description="Important for catalysis" evidence="1">
    <location>
        <position position="146"/>
    </location>
</feature>
<feature type="site" description="Important for catalysis" evidence="1">
    <location>
        <position position="196"/>
    </location>
</feature>
<sequence length="363" mass="39391">MTDKTYKIAVLPGDGIGPEVMAQAHKVLDAIEKKHAIHFEREEHDVGGIAIDNHGCPLPQSTVTACEESDAVLFGSVGGPKWEHLPPNDQPERGALLPLRKHFQLFCNLRPAQIHSGLEAFSPLRADISGRGFDIVVVRELTGGIYFGQPKGREGEGANEKAYDTEIYHRFEIERIAKIAFESARLRRKKVCSIDKANVLQSSILWREVVEEIAKDYPDVELSHMYIDNATMQLIKDPAQFDVMLCSNIFGDIISDECAMITGSMGMLPSASLNESKFGLYEPAGGSAPDIAGKNIANPVAQILSAALMLRYSLGEEAAAQDIENAVSQALAAGELTADLAGDKPALSTAEMGDKIAQYILNS</sequence>
<gene>
    <name evidence="1" type="primary">leuB</name>
    <name type="ordered locus">VV0486</name>
</gene>
<dbReference type="EC" id="1.1.1.85" evidence="1"/>
<dbReference type="EMBL" id="BA000037">
    <property type="protein sequence ID" value="BAC93250.1"/>
    <property type="molecule type" value="Genomic_DNA"/>
</dbReference>
<dbReference type="RefSeq" id="WP_011149404.1">
    <property type="nucleotide sequence ID" value="NC_005139.1"/>
</dbReference>
<dbReference type="SMR" id="Q7MP78"/>
<dbReference type="STRING" id="672.VV93_v1c04540"/>
<dbReference type="GeneID" id="93894962"/>
<dbReference type="KEGG" id="vvy:VV0486"/>
<dbReference type="PATRIC" id="fig|196600.6.peg.512"/>
<dbReference type="eggNOG" id="COG0473">
    <property type="taxonomic scope" value="Bacteria"/>
</dbReference>
<dbReference type="HOGENOM" id="CLU_031953_0_3_6"/>
<dbReference type="UniPathway" id="UPA00048">
    <property type="reaction ID" value="UER00072"/>
</dbReference>
<dbReference type="Proteomes" id="UP000002675">
    <property type="component" value="Chromosome I"/>
</dbReference>
<dbReference type="GO" id="GO:0005829">
    <property type="term" value="C:cytosol"/>
    <property type="evidence" value="ECO:0007669"/>
    <property type="project" value="TreeGrafter"/>
</dbReference>
<dbReference type="GO" id="GO:0003862">
    <property type="term" value="F:3-isopropylmalate dehydrogenase activity"/>
    <property type="evidence" value="ECO:0007669"/>
    <property type="project" value="UniProtKB-UniRule"/>
</dbReference>
<dbReference type="GO" id="GO:0000287">
    <property type="term" value="F:magnesium ion binding"/>
    <property type="evidence" value="ECO:0007669"/>
    <property type="project" value="InterPro"/>
</dbReference>
<dbReference type="GO" id="GO:0051287">
    <property type="term" value="F:NAD binding"/>
    <property type="evidence" value="ECO:0007669"/>
    <property type="project" value="InterPro"/>
</dbReference>
<dbReference type="GO" id="GO:0009098">
    <property type="term" value="P:L-leucine biosynthetic process"/>
    <property type="evidence" value="ECO:0007669"/>
    <property type="project" value="UniProtKB-UniRule"/>
</dbReference>
<dbReference type="FunFam" id="3.40.718.10:FF:000004">
    <property type="entry name" value="3-isopropylmalate dehydrogenase"/>
    <property type="match status" value="1"/>
</dbReference>
<dbReference type="Gene3D" id="3.40.718.10">
    <property type="entry name" value="Isopropylmalate Dehydrogenase"/>
    <property type="match status" value="1"/>
</dbReference>
<dbReference type="HAMAP" id="MF_01033">
    <property type="entry name" value="LeuB_type1"/>
    <property type="match status" value="1"/>
</dbReference>
<dbReference type="InterPro" id="IPR019818">
    <property type="entry name" value="IsoCit/isopropylmalate_DH_CS"/>
</dbReference>
<dbReference type="InterPro" id="IPR024084">
    <property type="entry name" value="IsoPropMal-DH-like_dom"/>
</dbReference>
<dbReference type="InterPro" id="IPR004429">
    <property type="entry name" value="Isopropylmalate_DH"/>
</dbReference>
<dbReference type="NCBIfam" id="TIGR00169">
    <property type="entry name" value="leuB"/>
    <property type="match status" value="1"/>
</dbReference>
<dbReference type="PANTHER" id="PTHR42979">
    <property type="entry name" value="3-ISOPROPYLMALATE DEHYDROGENASE"/>
    <property type="match status" value="1"/>
</dbReference>
<dbReference type="PANTHER" id="PTHR42979:SF1">
    <property type="entry name" value="3-ISOPROPYLMALATE DEHYDROGENASE"/>
    <property type="match status" value="1"/>
</dbReference>
<dbReference type="Pfam" id="PF00180">
    <property type="entry name" value="Iso_dh"/>
    <property type="match status" value="1"/>
</dbReference>
<dbReference type="SMART" id="SM01329">
    <property type="entry name" value="Iso_dh"/>
    <property type="match status" value="1"/>
</dbReference>
<dbReference type="SUPFAM" id="SSF53659">
    <property type="entry name" value="Isocitrate/Isopropylmalate dehydrogenase-like"/>
    <property type="match status" value="1"/>
</dbReference>
<dbReference type="PROSITE" id="PS00470">
    <property type="entry name" value="IDH_IMDH"/>
    <property type="match status" value="1"/>
</dbReference>
<comment type="function">
    <text evidence="1">Catalyzes the oxidation of 3-carboxy-2-hydroxy-4-methylpentanoate (3-isopropylmalate) to 3-carboxy-4-methyl-2-oxopentanoate. The product decarboxylates to 4-methyl-2 oxopentanoate.</text>
</comment>
<comment type="catalytic activity">
    <reaction evidence="1">
        <text>(2R,3S)-3-isopropylmalate + NAD(+) = 4-methyl-2-oxopentanoate + CO2 + NADH</text>
        <dbReference type="Rhea" id="RHEA:32271"/>
        <dbReference type="ChEBI" id="CHEBI:16526"/>
        <dbReference type="ChEBI" id="CHEBI:17865"/>
        <dbReference type="ChEBI" id="CHEBI:35121"/>
        <dbReference type="ChEBI" id="CHEBI:57540"/>
        <dbReference type="ChEBI" id="CHEBI:57945"/>
        <dbReference type="EC" id="1.1.1.85"/>
    </reaction>
</comment>
<comment type="cofactor">
    <cofactor evidence="1">
        <name>Mg(2+)</name>
        <dbReference type="ChEBI" id="CHEBI:18420"/>
    </cofactor>
    <cofactor evidence="1">
        <name>Mn(2+)</name>
        <dbReference type="ChEBI" id="CHEBI:29035"/>
    </cofactor>
    <text evidence="1">Binds 1 Mg(2+) or Mn(2+) ion per subunit.</text>
</comment>
<comment type="pathway">
    <text evidence="1">Amino-acid biosynthesis; L-leucine biosynthesis; L-leucine from 3-methyl-2-oxobutanoate: step 3/4.</text>
</comment>
<comment type="subunit">
    <text evidence="1">Homodimer.</text>
</comment>
<comment type="subcellular location">
    <subcellularLocation>
        <location evidence="1">Cytoplasm</location>
    </subcellularLocation>
</comment>
<comment type="similarity">
    <text evidence="1">Belongs to the isocitrate and isopropylmalate dehydrogenases family. LeuB type 1 subfamily.</text>
</comment>